<proteinExistence type="evidence at protein level"/>
<protein>
    <recommendedName>
        <fullName evidence="10">Nucleotide sugar transporter SLC35D2</fullName>
    </recommendedName>
    <alternativeName>
        <fullName evidence="5">Homolog of Fringe connection protein 1</fullName>
        <shortName evidence="5">HFRC1</shortName>
    </alternativeName>
    <alternativeName>
        <fullName evidence="8">SQV7-like protein</fullName>
        <shortName evidence="8">SQV7L</shortName>
    </alternativeName>
    <alternativeName>
        <fullName evidence="13">Solute carrier family 35 member D2</fullName>
    </alternativeName>
    <alternativeName>
        <fullName evidence="7">UDP-galactose transporter-related protein 8</fullName>
        <shortName evidence="7">UGTrel8</shortName>
    </alternativeName>
</protein>
<keyword id="KW-0025">Alternative splicing</keyword>
<keyword id="KW-0050">Antiport</keyword>
<keyword id="KW-0333">Golgi apparatus</keyword>
<keyword id="KW-0472">Membrane</keyword>
<keyword id="KW-1267">Proteomics identification</keyword>
<keyword id="KW-1185">Reference proteome</keyword>
<keyword id="KW-0762">Sugar transport</keyword>
<keyword id="KW-0812">Transmembrane</keyword>
<keyword id="KW-1133">Transmembrane helix</keyword>
<keyword id="KW-0813">Transport</keyword>
<name>S35D2_HUMAN</name>
<dbReference type="EMBL" id="AB106537">
    <property type="protein sequence ID" value="BAD14396.1"/>
    <property type="molecule type" value="mRNA"/>
</dbReference>
<dbReference type="EMBL" id="AB122077">
    <property type="protein sequence ID" value="BAC99016.1"/>
    <property type="molecule type" value="mRNA"/>
</dbReference>
<dbReference type="EMBL" id="AL160269">
    <property type="status" value="NOT_ANNOTATED_CDS"/>
    <property type="molecule type" value="Genomic_DNA"/>
</dbReference>
<dbReference type="EMBL" id="CH471174">
    <property type="protein sequence ID" value="EAW92646.1"/>
    <property type="molecule type" value="Genomic_DNA"/>
</dbReference>
<dbReference type="EMBL" id="BC009413">
    <property type="protein sequence ID" value="AAH09413.1"/>
    <property type="molecule type" value="mRNA"/>
</dbReference>
<dbReference type="EMBL" id="BC100278">
    <property type="protein sequence ID" value="AAI00279.1"/>
    <property type="molecule type" value="mRNA"/>
</dbReference>
<dbReference type="EMBL" id="BC113579">
    <property type="protein sequence ID" value="AAI13580.1"/>
    <property type="molecule type" value="mRNA"/>
</dbReference>
<dbReference type="EMBL" id="AJ005866">
    <property type="protein sequence ID" value="CAA06743.1"/>
    <property type="molecule type" value="mRNA"/>
</dbReference>
<dbReference type="CCDS" id="CCDS6717.1">
    <molecule id="Q76EJ3-1"/>
</dbReference>
<dbReference type="CCDS" id="CCDS69625.1">
    <molecule id="Q76EJ3-2"/>
</dbReference>
<dbReference type="RefSeq" id="NP_001273919.1">
    <molecule id="Q76EJ3-2"/>
    <property type="nucleotide sequence ID" value="NM_001286990.2"/>
</dbReference>
<dbReference type="RefSeq" id="NP_008932.2">
    <molecule id="Q76EJ3-1"/>
    <property type="nucleotide sequence ID" value="NM_007001.3"/>
</dbReference>
<dbReference type="SMR" id="Q76EJ3"/>
<dbReference type="BioGRID" id="116234">
    <property type="interactions" value="1"/>
</dbReference>
<dbReference type="FunCoup" id="Q76EJ3">
    <property type="interactions" value="553"/>
</dbReference>
<dbReference type="IntAct" id="Q76EJ3">
    <property type="interactions" value="1"/>
</dbReference>
<dbReference type="STRING" id="9606.ENSP00000253270"/>
<dbReference type="TCDB" id="2.A.7.15.1">
    <property type="family name" value="the drug/metabolite transporter (dmt) superfamily"/>
</dbReference>
<dbReference type="BioMuta" id="SLC35D2"/>
<dbReference type="DMDM" id="74749832"/>
<dbReference type="jPOST" id="Q76EJ3"/>
<dbReference type="MassIVE" id="Q76EJ3"/>
<dbReference type="PaxDb" id="9606-ENSP00000253270"/>
<dbReference type="PeptideAtlas" id="Q76EJ3"/>
<dbReference type="ProteomicsDB" id="68663">
    <molecule id="Q76EJ3-1"/>
</dbReference>
<dbReference type="ProteomicsDB" id="68664">
    <molecule id="Q76EJ3-2"/>
</dbReference>
<dbReference type="Antibodypedia" id="28641">
    <property type="antibodies" value="75 antibodies from 24 providers"/>
</dbReference>
<dbReference type="DNASU" id="11046"/>
<dbReference type="Ensembl" id="ENST00000253270.13">
    <molecule id="Q76EJ3-1"/>
    <property type="protein sequence ID" value="ENSP00000253270.7"/>
    <property type="gene ID" value="ENSG00000130958.13"/>
</dbReference>
<dbReference type="Ensembl" id="ENST00000375259.9">
    <molecule id="Q76EJ3-2"/>
    <property type="protein sequence ID" value="ENSP00000364408.4"/>
    <property type="gene ID" value="ENSG00000130958.13"/>
</dbReference>
<dbReference type="GeneID" id="11046"/>
<dbReference type="KEGG" id="hsa:11046"/>
<dbReference type="MANE-Select" id="ENST00000253270.13">
    <property type="protein sequence ID" value="ENSP00000253270.7"/>
    <property type="RefSeq nucleotide sequence ID" value="NM_007001.3"/>
    <property type="RefSeq protein sequence ID" value="NP_008932.2"/>
</dbReference>
<dbReference type="UCSC" id="uc004awc.4">
    <molecule id="Q76EJ3-1"/>
    <property type="organism name" value="human"/>
</dbReference>
<dbReference type="AGR" id="HGNC:20799"/>
<dbReference type="CTD" id="11046"/>
<dbReference type="DisGeNET" id="11046"/>
<dbReference type="GeneCards" id="SLC35D2"/>
<dbReference type="HGNC" id="HGNC:20799">
    <property type="gene designation" value="SLC35D2"/>
</dbReference>
<dbReference type="HPA" id="ENSG00000130958">
    <property type="expression patterns" value="Low tissue specificity"/>
</dbReference>
<dbReference type="MIM" id="609182">
    <property type="type" value="gene"/>
</dbReference>
<dbReference type="neXtProt" id="NX_Q76EJ3"/>
<dbReference type="OpenTargets" id="ENSG00000130958"/>
<dbReference type="PharmGKB" id="PA134909604"/>
<dbReference type="VEuPathDB" id="HostDB:ENSG00000130958"/>
<dbReference type="eggNOG" id="KOG1444">
    <property type="taxonomic scope" value="Eukaryota"/>
</dbReference>
<dbReference type="GeneTree" id="ENSGT00940000160237"/>
<dbReference type="HOGENOM" id="CLU_040726_1_0_1"/>
<dbReference type="InParanoid" id="Q76EJ3"/>
<dbReference type="OMA" id="ERTINFP"/>
<dbReference type="OrthoDB" id="417037at2759"/>
<dbReference type="PAN-GO" id="Q76EJ3">
    <property type="GO annotations" value="5 GO annotations based on evolutionary models"/>
</dbReference>
<dbReference type="PhylomeDB" id="Q76EJ3"/>
<dbReference type="TreeFam" id="TF313307"/>
<dbReference type="PathwayCommons" id="Q76EJ3"/>
<dbReference type="Reactome" id="R-HSA-173599">
    <property type="pathway name" value="Formation of the active cofactor, UDP-glucuronate"/>
</dbReference>
<dbReference type="Reactome" id="R-HSA-2022854">
    <property type="pathway name" value="Keratan sulfate biosynthesis"/>
</dbReference>
<dbReference type="Reactome" id="R-HSA-2022928">
    <property type="pathway name" value="HS-GAG biosynthesis"/>
</dbReference>
<dbReference type="Reactome" id="R-HSA-727802">
    <property type="pathway name" value="Transport of nucleotide sugars"/>
</dbReference>
<dbReference type="SignaLink" id="Q76EJ3"/>
<dbReference type="BioGRID-ORCS" id="11046">
    <property type="hits" value="14 hits in 1151 CRISPR screens"/>
</dbReference>
<dbReference type="ChiTaRS" id="SLC35D2">
    <property type="organism name" value="human"/>
</dbReference>
<dbReference type="GenomeRNAi" id="11046"/>
<dbReference type="Pharos" id="Q76EJ3">
    <property type="development level" value="Tbio"/>
</dbReference>
<dbReference type="PRO" id="PR:Q76EJ3"/>
<dbReference type="Proteomes" id="UP000005640">
    <property type="component" value="Chromosome 9"/>
</dbReference>
<dbReference type="RNAct" id="Q76EJ3">
    <property type="molecule type" value="protein"/>
</dbReference>
<dbReference type="Bgee" id="ENSG00000130958">
    <property type="expression patterns" value="Expressed in jejunal mucosa and 192 other cell types or tissues"/>
</dbReference>
<dbReference type="ExpressionAtlas" id="Q76EJ3">
    <property type="expression patterns" value="baseline and differential"/>
</dbReference>
<dbReference type="GO" id="GO:0005794">
    <property type="term" value="C:Golgi apparatus"/>
    <property type="evidence" value="ECO:0000314"/>
    <property type="project" value="HPA"/>
</dbReference>
<dbReference type="GO" id="GO:0000139">
    <property type="term" value="C:Golgi membrane"/>
    <property type="evidence" value="ECO:0000314"/>
    <property type="project" value="UniProtKB"/>
</dbReference>
<dbReference type="GO" id="GO:0015297">
    <property type="term" value="F:antiporter activity"/>
    <property type="evidence" value="ECO:0000318"/>
    <property type="project" value="GO_Central"/>
</dbReference>
<dbReference type="GO" id="GO:0005338">
    <property type="term" value="F:nucleotide-sugar transmembrane transporter activity"/>
    <property type="evidence" value="ECO:0000269"/>
    <property type="project" value="Reactome"/>
</dbReference>
<dbReference type="GO" id="GO:0005461">
    <property type="term" value="F:UDP-glucuronate transmembrane transporter activity"/>
    <property type="evidence" value="ECO:0000318"/>
    <property type="project" value="GO_Central"/>
</dbReference>
<dbReference type="GO" id="GO:0005463">
    <property type="term" value="F:UDP-N-acetylgalactosamine transmembrane transporter activity"/>
    <property type="evidence" value="ECO:0000318"/>
    <property type="project" value="GO_Central"/>
</dbReference>
<dbReference type="GO" id="GO:0005462">
    <property type="term" value="F:UDP-N-acetylglucosamine transmembrane transporter activity"/>
    <property type="evidence" value="ECO:0000318"/>
    <property type="project" value="GO_Central"/>
</dbReference>
<dbReference type="GO" id="GO:0015012">
    <property type="term" value="P:heparan sulfate proteoglycan biosynthetic process"/>
    <property type="evidence" value="ECO:0000315"/>
    <property type="project" value="UniProtKB"/>
</dbReference>
<dbReference type="GO" id="GO:0018146">
    <property type="term" value="P:keratan sulfate proteoglycan biosynthetic process"/>
    <property type="evidence" value="ECO:0000304"/>
    <property type="project" value="Reactome"/>
</dbReference>
<dbReference type="GO" id="GO:0015780">
    <property type="term" value="P:nucleotide-sugar transmembrane transport"/>
    <property type="evidence" value="ECO:0000318"/>
    <property type="project" value="GO_Central"/>
</dbReference>
<dbReference type="InterPro" id="IPR004853">
    <property type="entry name" value="Sugar_P_trans_dom"/>
</dbReference>
<dbReference type="InterPro" id="IPR050186">
    <property type="entry name" value="TPT_transporter"/>
</dbReference>
<dbReference type="PANTHER" id="PTHR11132">
    <property type="entry name" value="SOLUTE CARRIER FAMILY 35"/>
    <property type="match status" value="1"/>
</dbReference>
<dbReference type="Pfam" id="PF03151">
    <property type="entry name" value="TPT"/>
    <property type="match status" value="1"/>
</dbReference>
<accession>Q76EJ3</accession>
<accession>O95454</accession>
<accession>Q498C1</accession>
<accession>Q75W21</accession>
<accession>Q7Z5X5</accession>
<comment type="function">
    <text evidence="10 11">Nucleotide sugar antiporter transporting UDP-N-acetylglucosamine (UDP-GlcNAc) and UDP-glucose (UDP-Glc) from the cytosol into the lumen of the Golgi in exchange of UMP. By supplying UDP-N-acetylglucosamine, a donor substrate to heparan sulfate synthases, probably takes part in the synthesis of these glycoconjugates.</text>
</comment>
<comment type="catalytic activity">
    <reaction evidence="10 11">
        <text>UMP(out) + UDP-N-acetyl-alpha-D-glucosamine(in) = UMP(in) + UDP-N-acetyl-alpha-D-glucosamine(out)</text>
        <dbReference type="Rhea" id="RHEA:72695"/>
        <dbReference type="ChEBI" id="CHEBI:57705"/>
        <dbReference type="ChEBI" id="CHEBI:57865"/>
    </reaction>
</comment>
<comment type="catalytic activity">
    <reaction evidence="10">
        <text>UMP(out) + UDP-alpha-D-glucose(in) = UMP(in) + UDP-alpha-D-glucose(out)</text>
        <dbReference type="Rhea" id="RHEA:72731"/>
        <dbReference type="ChEBI" id="CHEBI:57865"/>
        <dbReference type="ChEBI" id="CHEBI:58885"/>
    </reaction>
</comment>
<comment type="biophysicochemical properties">
    <kinetics>
        <KM evidence="2">8 uM for UDP-N-acetylglucosamine</KM>
        <KM evidence="2">2.1 uM for UDP-glucose</KM>
    </kinetics>
</comment>
<comment type="subcellular location">
    <subcellularLocation>
        <location evidence="2 3">Golgi apparatus membrane</location>
        <topology evidence="1">Multi-pass membrane protein</topology>
    </subcellularLocation>
</comment>
<comment type="alternative products">
    <event type="alternative splicing"/>
    <isoform>
        <id>Q76EJ3-1</id>
        <name>1</name>
        <sequence type="displayed"/>
    </isoform>
    <isoform>
        <id>Q76EJ3-2</id>
        <name>2</name>
        <sequence type="described" ref="VSP_030006"/>
    </isoform>
</comment>
<comment type="tissue specificity">
    <text evidence="3">Highly expressed in heart, kidney, small intestine, placenta, lung and peripheral blood leukocyte. Weakly expressed in skeletal muscle and spleen. Not expressed in brain, colon and thymus.</text>
</comment>
<comment type="similarity">
    <text evidence="9">Belongs to the TPT transporter family. SLC35D subfamily.</text>
</comment>
<evidence type="ECO:0000255" key="1"/>
<evidence type="ECO:0000269" key="2">
    <source>
    </source>
</evidence>
<evidence type="ECO:0000269" key="3">
    <source>
    </source>
</evidence>
<evidence type="ECO:0000269" key="4">
    <source>
    </source>
</evidence>
<evidence type="ECO:0000303" key="5">
    <source>
    </source>
</evidence>
<evidence type="ECO:0000303" key="6">
    <source>
    </source>
</evidence>
<evidence type="ECO:0000303" key="7">
    <source>
    </source>
</evidence>
<evidence type="ECO:0000303" key="8">
    <source>
    </source>
</evidence>
<evidence type="ECO:0000305" key="9"/>
<evidence type="ECO:0000305" key="10">
    <source>
    </source>
</evidence>
<evidence type="ECO:0000305" key="11">
    <source>
    </source>
</evidence>
<evidence type="ECO:0000312" key="12">
    <source>
        <dbReference type="EMBL" id="BAD14396.1"/>
    </source>
</evidence>
<evidence type="ECO:0000312" key="13">
    <source>
        <dbReference type="HGNC" id="HGNC:20799"/>
    </source>
</evidence>
<gene>
    <name evidence="13" type="primary">SLC35D2</name>
    <name evidence="12" type="synonym">HFRC</name>
    <name evidence="7" type="synonym">UGTREL8</name>
</gene>
<feature type="chain" id="PRO_0000313080" description="Nucleotide sugar transporter SLC35D2">
    <location>
        <begin position="1"/>
        <end position="337"/>
    </location>
</feature>
<feature type="topological domain" description="Cytoplasmic" evidence="1">
    <location>
        <begin position="1"/>
        <end position="27"/>
    </location>
</feature>
<feature type="transmembrane region" description="Helical" evidence="1">
    <location>
        <begin position="28"/>
        <end position="48"/>
    </location>
</feature>
<feature type="topological domain" description="Extracellular" evidence="1">
    <location>
        <begin position="49"/>
        <end position="53"/>
    </location>
</feature>
<feature type="transmembrane region" description="Helical" evidence="1">
    <location>
        <begin position="54"/>
        <end position="74"/>
    </location>
</feature>
<feature type="topological domain" description="Cytoplasmic" evidence="1">
    <location>
        <begin position="75"/>
        <end position="146"/>
    </location>
</feature>
<feature type="transmembrane region" description="Helical" evidence="1">
    <location>
        <begin position="147"/>
        <end position="167"/>
    </location>
</feature>
<feature type="transmembrane region" description="Helical" evidence="1">
    <location>
        <begin position="168"/>
        <end position="188"/>
    </location>
</feature>
<feature type="topological domain" description="Cytoplasmic" evidence="1">
    <location>
        <begin position="189"/>
        <end position="201"/>
    </location>
</feature>
<feature type="transmembrane region" description="Helical" evidence="1">
    <location>
        <begin position="202"/>
        <end position="222"/>
    </location>
</feature>
<feature type="topological domain" description="Extracellular" evidence="1">
    <location>
        <begin position="223"/>
        <end position="237"/>
    </location>
</feature>
<feature type="transmembrane region" description="Helical" evidence="1">
    <location>
        <begin position="238"/>
        <end position="258"/>
    </location>
</feature>
<feature type="topological domain" description="Cytoplasmic" evidence="1">
    <location>
        <begin position="259"/>
        <end position="265"/>
    </location>
</feature>
<feature type="transmembrane region" description="Helical" evidence="1">
    <location>
        <begin position="266"/>
        <end position="288"/>
    </location>
</feature>
<feature type="topological domain" description="Extracellular" evidence="1">
    <location>
        <begin position="289"/>
        <end position="292"/>
    </location>
</feature>
<feature type="transmembrane region" description="Helical" evidence="1">
    <location>
        <begin position="293"/>
        <end position="315"/>
    </location>
</feature>
<feature type="topological domain" description="Cytoplasmic" evidence="1">
    <location>
        <begin position="316"/>
        <end position="337"/>
    </location>
</feature>
<feature type="splice variant" id="VSP_030006" description="In isoform 2." evidence="6">
    <location>
        <begin position="164"/>
        <end position="251"/>
    </location>
</feature>
<feature type="sequence variant" id="VAR_037653" description="In dbSNP:rs1051763." evidence="3 4">
    <original>A</original>
    <variation>S</variation>
    <location>
        <position position="184"/>
    </location>
</feature>
<reference key="1">
    <citation type="journal article" date="2004" name="J. Biol. Chem.">
        <title>Molecular cloning and characterization of a human multisubstrate specific nucleotide-sugar transporter homologous to Drosophila fringe connection.</title>
        <authorList>
            <person name="Suda T."/>
            <person name="Kamiyama S."/>
            <person name="Suzuki M."/>
            <person name="Kikuchi N."/>
            <person name="Nakayama K."/>
            <person name="Narimatsu H."/>
            <person name="Jigami Y."/>
            <person name="Aoki T."/>
            <person name="Nishihara S."/>
        </authorList>
    </citation>
    <scope>NUCLEOTIDE SEQUENCE [MRNA] (ISOFORM 1)</scope>
    <scope>FUNCTION</scope>
    <scope>TRANSPORTER ACTIVITY</scope>
    <scope>BIOPHYSICOCHEMICAL PROPERTIES</scope>
    <scope>SUBCELLULAR LOCATION</scope>
    <source>
        <tissue>Colon</tissue>
    </source>
</reference>
<reference key="2">
    <citation type="journal article" date="2005" name="Genomics">
        <title>Identification and characterization of human Golgi nucleotide sugar transporter SLC35D2, a novel member of the SLC35 nucleotide sugar transporter family.</title>
        <authorList>
            <person name="Ishida N."/>
            <person name="Kuba T."/>
            <person name="Aoki K."/>
            <person name="Miyatake S."/>
            <person name="Kawakita M."/>
            <person name="Sanai Y."/>
        </authorList>
    </citation>
    <scope>NUCLEOTIDE SEQUENCE [MRNA] (ISOFORM 1)</scope>
    <scope>FUNCTION</scope>
    <scope>TRANSPORTER ACTIVITY</scope>
    <scope>SUBCELLULAR LOCATION</scope>
    <scope>TISSUE SPECIFICITY</scope>
    <scope>VARIANT SER-184</scope>
</reference>
<reference key="3">
    <citation type="journal article" date="2004" name="Nature">
        <title>DNA sequence and analysis of human chromosome 9.</title>
        <authorList>
            <person name="Humphray S.J."/>
            <person name="Oliver K."/>
            <person name="Hunt A.R."/>
            <person name="Plumb R.W."/>
            <person name="Loveland J.E."/>
            <person name="Howe K.L."/>
            <person name="Andrews T.D."/>
            <person name="Searle S."/>
            <person name="Hunt S.E."/>
            <person name="Scott C.E."/>
            <person name="Jones M.C."/>
            <person name="Ainscough R."/>
            <person name="Almeida J.P."/>
            <person name="Ambrose K.D."/>
            <person name="Ashwell R.I.S."/>
            <person name="Babbage A.K."/>
            <person name="Babbage S."/>
            <person name="Bagguley C.L."/>
            <person name="Bailey J."/>
            <person name="Banerjee R."/>
            <person name="Barker D.J."/>
            <person name="Barlow K.F."/>
            <person name="Bates K."/>
            <person name="Beasley H."/>
            <person name="Beasley O."/>
            <person name="Bird C.P."/>
            <person name="Bray-Allen S."/>
            <person name="Brown A.J."/>
            <person name="Brown J.Y."/>
            <person name="Burford D."/>
            <person name="Burrill W."/>
            <person name="Burton J."/>
            <person name="Carder C."/>
            <person name="Carter N.P."/>
            <person name="Chapman J.C."/>
            <person name="Chen Y."/>
            <person name="Clarke G."/>
            <person name="Clark S.Y."/>
            <person name="Clee C.M."/>
            <person name="Clegg S."/>
            <person name="Collier R.E."/>
            <person name="Corby N."/>
            <person name="Crosier M."/>
            <person name="Cummings A.T."/>
            <person name="Davies J."/>
            <person name="Dhami P."/>
            <person name="Dunn M."/>
            <person name="Dutta I."/>
            <person name="Dyer L.W."/>
            <person name="Earthrowl M.E."/>
            <person name="Faulkner L."/>
            <person name="Fleming C.J."/>
            <person name="Frankish A."/>
            <person name="Frankland J.A."/>
            <person name="French L."/>
            <person name="Fricker D.G."/>
            <person name="Garner P."/>
            <person name="Garnett J."/>
            <person name="Ghori J."/>
            <person name="Gilbert J.G.R."/>
            <person name="Glison C."/>
            <person name="Grafham D.V."/>
            <person name="Gribble S."/>
            <person name="Griffiths C."/>
            <person name="Griffiths-Jones S."/>
            <person name="Grocock R."/>
            <person name="Guy J."/>
            <person name="Hall R.E."/>
            <person name="Hammond S."/>
            <person name="Harley J.L."/>
            <person name="Harrison E.S.I."/>
            <person name="Hart E.A."/>
            <person name="Heath P.D."/>
            <person name="Henderson C.D."/>
            <person name="Hopkins B.L."/>
            <person name="Howard P.J."/>
            <person name="Howden P.J."/>
            <person name="Huckle E."/>
            <person name="Johnson C."/>
            <person name="Johnson D."/>
            <person name="Joy A.A."/>
            <person name="Kay M."/>
            <person name="Keenan S."/>
            <person name="Kershaw J.K."/>
            <person name="Kimberley A.M."/>
            <person name="King A."/>
            <person name="Knights A."/>
            <person name="Laird G.K."/>
            <person name="Langford C."/>
            <person name="Lawlor S."/>
            <person name="Leongamornlert D.A."/>
            <person name="Leversha M."/>
            <person name="Lloyd C."/>
            <person name="Lloyd D.M."/>
            <person name="Lovell J."/>
            <person name="Martin S."/>
            <person name="Mashreghi-Mohammadi M."/>
            <person name="Matthews L."/>
            <person name="McLaren S."/>
            <person name="McLay K.E."/>
            <person name="McMurray A."/>
            <person name="Milne S."/>
            <person name="Nickerson T."/>
            <person name="Nisbett J."/>
            <person name="Nordsiek G."/>
            <person name="Pearce A.V."/>
            <person name="Peck A.I."/>
            <person name="Porter K.M."/>
            <person name="Pandian R."/>
            <person name="Pelan S."/>
            <person name="Phillimore B."/>
            <person name="Povey S."/>
            <person name="Ramsey Y."/>
            <person name="Rand V."/>
            <person name="Scharfe M."/>
            <person name="Sehra H.K."/>
            <person name="Shownkeen R."/>
            <person name="Sims S.K."/>
            <person name="Skuce C.D."/>
            <person name="Smith M."/>
            <person name="Steward C.A."/>
            <person name="Swarbreck D."/>
            <person name="Sycamore N."/>
            <person name="Tester J."/>
            <person name="Thorpe A."/>
            <person name="Tracey A."/>
            <person name="Tromans A."/>
            <person name="Thomas D.W."/>
            <person name="Wall M."/>
            <person name="Wallis J.M."/>
            <person name="West A.P."/>
            <person name="Whitehead S.L."/>
            <person name="Willey D.L."/>
            <person name="Williams S.A."/>
            <person name="Wilming L."/>
            <person name="Wray P.W."/>
            <person name="Young L."/>
            <person name="Ashurst J.L."/>
            <person name="Coulson A."/>
            <person name="Blocker H."/>
            <person name="Durbin R.M."/>
            <person name="Sulston J.E."/>
            <person name="Hubbard T."/>
            <person name="Jackson M.J."/>
            <person name="Bentley D.R."/>
            <person name="Beck S."/>
            <person name="Rogers J."/>
            <person name="Dunham I."/>
        </authorList>
    </citation>
    <scope>NUCLEOTIDE SEQUENCE [LARGE SCALE GENOMIC DNA]</scope>
</reference>
<reference key="4">
    <citation type="submission" date="2005-07" db="EMBL/GenBank/DDBJ databases">
        <authorList>
            <person name="Mural R.J."/>
            <person name="Istrail S."/>
            <person name="Sutton G.G."/>
            <person name="Florea L."/>
            <person name="Halpern A.L."/>
            <person name="Mobarry C.M."/>
            <person name="Lippert R."/>
            <person name="Walenz B."/>
            <person name="Shatkay H."/>
            <person name="Dew I."/>
            <person name="Miller J.R."/>
            <person name="Flanigan M.J."/>
            <person name="Edwards N.J."/>
            <person name="Bolanos R."/>
            <person name="Fasulo D."/>
            <person name="Halldorsson B.V."/>
            <person name="Hannenhalli S."/>
            <person name="Turner R."/>
            <person name="Yooseph S."/>
            <person name="Lu F."/>
            <person name="Nusskern D.R."/>
            <person name="Shue B.C."/>
            <person name="Zheng X.H."/>
            <person name="Zhong F."/>
            <person name="Delcher A.L."/>
            <person name="Huson D.H."/>
            <person name="Kravitz S.A."/>
            <person name="Mouchard L."/>
            <person name="Reinert K."/>
            <person name="Remington K.A."/>
            <person name="Clark A.G."/>
            <person name="Waterman M.S."/>
            <person name="Eichler E.E."/>
            <person name="Adams M.D."/>
            <person name="Hunkapiller M.W."/>
            <person name="Myers E.W."/>
            <person name="Venter J.C."/>
        </authorList>
    </citation>
    <scope>NUCLEOTIDE SEQUENCE [LARGE SCALE GENOMIC DNA]</scope>
</reference>
<reference key="5">
    <citation type="journal article" date="2004" name="Genome Res.">
        <title>The status, quality, and expansion of the NIH full-length cDNA project: the Mammalian Gene Collection (MGC).</title>
        <authorList>
            <consortium name="The MGC Project Team"/>
        </authorList>
    </citation>
    <scope>NUCLEOTIDE SEQUENCE [LARGE SCALE MRNA] (ISOFORMS 1 AND 2)</scope>
    <source>
        <tissue>Lung</tissue>
        <tissue>Skin</tissue>
    </source>
</reference>
<reference key="6">
    <citation type="journal article" date="1999" name="Proc. Natl. Acad. Sci. U.S.A.">
        <title>Three proteins involved in Caenorhabditis elegans vulval invagination are similar to components of a glycosylation pathway.</title>
        <authorList>
            <person name="Herman T."/>
            <person name="Horvitz H.R."/>
        </authorList>
    </citation>
    <scope>NUCLEOTIDE SEQUENCE [MRNA] OF 77-337 (ISOFORM 1)</scope>
    <scope>VARIANT SER-184</scope>
    <source>
        <tissue>Placenta</tissue>
    </source>
</reference>
<reference key="7">
    <citation type="journal article" date="2012" name="Proc. Natl. Acad. Sci. U.S.A.">
        <title>N-terminal acetylome analyses and functional insights of the N-terminal acetyltransferase NatB.</title>
        <authorList>
            <person name="Van Damme P."/>
            <person name="Lasa M."/>
            <person name="Polevoda B."/>
            <person name="Gazquez C."/>
            <person name="Elosegui-Artola A."/>
            <person name="Kim D.S."/>
            <person name="De Juan-Pardo E."/>
            <person name="Demeyer K."/>
            <person name="Hole K."/>
            <person name="Larrea E."/>
            <person name="Timmerman E."/>
            <person name="Prieto J."/>
            <person name="Arnesen T."/>
            <person name="Sherman F."/>
            <person name="Gevaert K."/>
            <person name="Aldabe R."/>
        </authorList>
    </citation>
    <scope>IDENTIFICATION BY MASS SPECTROMETRY [LARGE SCALE ANALYSIS]</scope>
</reference>
<organism>
    <name type="scientific">Homo sapiens</name>
    <name type="common">Human</name>
    <dbReference type="NCBI Taxonomy" id="9606"/>
    <lineage>
        <taxon>Eukaryota</taxon>
        <taxon>Metazoa</taxon>
        <taxon>Chordata</taxon>
        <taxon>Craniata</taxon>
        <taxon>Vertebrata</taxon>
        <taxon>Euteleostomi</taxon>
        <taxon>Mammalia</taxon>
        <taxon>Eutheria</taxon>
        <taxon>Euarchontoglires</taxon>
        <taxon>Primates</taxon>
        <taxon>Haplorrhini</taxon>
        <taxon>Catarrhini</taxon>
        <taxon>Hominidae</taxon>
        <taxon>Homo</taxon>
    </lineage>
</organism>
<sequence length="337" mass="36673">MTAGGQAEAEGAGGEPGAARLPSRVARLLSALFYGTCSFLIVLVNKALLTTYGFPSPIFLGIGQMAATIMILYVSKLNKIIHFPDFDKKIPVKLFPLPLLYVGNHISGLSSTSKLSLPMFTVLRKFTIPLTLLLETIILGKQYSLNIILSVFAIILGAFIAAGSDLAFNLEGYIFVFLNDIFTAANGVYTKQKMDPKELGKYGVLFYNACFMIIPTLIISVSTGDLQQATEFNQWKNVVFILQFLLSCFLGFLLMYSTVLCSYYNSALTTAVVGAIKNVSVAYIGILIGGDYIFSLLNFVGLNICMAGGLRYSFLTLSSQLKPKPVGEENICLDLKS</sequence>